<proteinExistence type="evidence at protein level"/>
<evidence type="ECO:0000255" key="1"/>
<evidence type="ECO:0000269" key="2">
    <source>
    </source>
</evidence>
<evidence type="ECO:0000269" key="3">
    <source>
    </source>
</evidence>
<evidence type="ECO:0000269" key="4">
    <source>
    </source>
</evidence>
<evidence type="ECO:0000269" key="5">
    <source>
    </source>
</evidence>
<evidence type="ECO:0000303" key="6">
    <source>
    </source>
</evidence>
<evidence type="ECO:0000305" key="7"/>
<evidence type="ECO:0000312" key="8">
    <source>
        <dbReference type="EMBL" id="AAT35227.1"/>
    </source>
</evidence>
<evidence type="ECO:0000312" key="9">
    <source>
        <dbReference type="EMBL" id="ABB13578.1"/>
    </source>
</evidence>
<evidence type="ECO:0000312" key="10">
    <source>
        <dbReference type="PDB" id="3VSG"/>
    </source>
</evidence>
<evidence type="ECO:0007829" key="11">
    <source>
        <dbReference type="PDB" id="3VSJ"/>
    </source>
</evidence>
<reference evidence="7 8" key="1">
    <citation type="journal article" date="2005" name="Arch. Microbiol.">
        <title>A novel 2-aminophenol 1,6-dioxygenase involved in the degradation of p-chloronitrobenzene by Comamonas strain CNB-1: purification, properties, genetic cloning and expression in Escherichia coli.</title>
        <authorList>
            <person name="Wu J.F."/>
            <person name="Sun C.W."/>
            <person name="Jiang C.Y."/>
            <person name="Liu Z.P."/>
            <person name="Liu S.J."/>
        </authorList>
    </citation>
    <scope>NUCLEOTIDE SEQUENCE [GENOMIC DNA]</scope>
    <scope>PROTEIN SEQUENCE OF 2-9</scope>
    <scope>FUNCTION</scope>
    <scope>SUBUNIT</scope>
    <source>
        <strain evidence="2">CNB-1</strain>
        <plasmid>pCNB1</plasmid>
    </source>
</reference>
<reference evidence="7 9" key="2">
    <citation type="journal article" date="2006" name="Appl. Environ. Microbiol.">
        <title>Novel partial reductive pathway for 4-chloronitrobenzene and nitrobenzene degradation in Comamonas sp. strain CNB-1.</title>
        <authorList>
            <person name="Wu J.F."/>
            <person name="Jiang C.Y."/>
            <person name="Wang B.J."/>
            <person name="Ma Y.F."/>
            <person name="Liu Z.P."/>
            <person name="Liu S.J."/>
        </authorList>
    </citation>
    <scope>NUCLEOTIDE SEQUENCE [GENOMIC DNA]</scope>
    <scope>FUNCTION</scope>
    <scope>PATHWAY</scope>
    <source>
        <strain evidence="3">CNB-1</strain>
        <plasmid>pCNB1</plasmid>
    </source>
</reference>
<reference evidence="7 9" key="3">
    <citation type="journal article" date="2007" name="Appl. Environ. Microbiol.">
        <title>Nucleotide sequence of plasmid pCNB1 from Comamonas strain CNB-1 reveals novel genetic organization and evolution for 4-chloronitrobenzene degradation.</title>
        <authorList>
            <person name="Ma Y.F."/>
            <person name="Wu J.F."/>
            <person name="Wang S.Y."/>
            <person name="Jiang C.Y."/>
            <person name="Zhang Y."/>
            <person name="Qi S.W."/>
            <person name="Liu L."/>
            <person name="Zhao G.P."/>
            <person name="Liu S.J."/>
        </authorList>
    </citation>
    <scope>NUCLEOTIDE SEQUENCE [GENOMIC DNA]</scope>
    <scope>PATHWAY</scope>
    <source>
        <strain evidence="4">CNB-1</strain>
        <plasmid>pCNB1</plasmid>
    </source>
</reference>
<reference evidence="7 10" key="4">
    <citation type="journal article" date="2013" name="Acta Crystallogr. D">
        <title>Structures of aminophenol dioxygenase in complex with intermediate, product and inhibitor.</title>
        <authorList>
            <person name="Li de F."/>
            <person name="Zhang J.Y."/>
            <person name="Hou Y.J."/>
            <person name="Liu L."/>
            <person name="Hu Y."/>
            <person name="Liu S.J."/>
            <person name="Wang da C."/>
            <person name="Liu W."/>
        </authorList>
    </citation>
    <scope>X-RAY CRYSTALLOGRAPHY (2.30 ANGSTROMS) IN COMPLEX WITH BETA SUBUNIT</scope>
    <scope>SUBUNIT</scope>
    <source>
        <strain evidence="5">CNB-1</strain>
        <plasmid>pCNB1</plasmid>
    </source>
</reference>
<gene>
    <name evidence="9" type="primary">cnbCa</name>
    <name evidence="8" type="synonym">amnA</name>
</gene>
<accession>Q6J1Z5</accession>
<accession>Q38M40</accession>
<geneLocation type="plasmid">
    <name>pCNB1</name>
</geneLocation>
<sequence length="271" mass="29266">MTVVSAFLVPGTPLPQLKPEVPSWGQLAAATERAGKALAASRPDVVLVYSTQWLAVLDQQWLTRPRSEGVHVDENWYEFGDLAYDIRADTALAEACVTSSPLHGVHARGVNYDGFPIDTGTITACTLMGIGTDAFPLVVGSNNLYHSGEITEKLAALAVDCAKDQNKRVAVVGVGGLSGSLFREEIDPREDRIANEEDDKWNRRVLKLIEAGDVSALREAMPVYAKEARVDMGFKHLHWILGALKGKFSGANVLGYGPSYGSGAAVIEFRL</sequence>
<organism>
    <name type="scientific">Comamonas testosteroni</name>
    <name type="common">Pseudomonas testosteroni</name>
    <dbReference type="NCBI Taxonomy" id="285"/>
    <lineage>
        <taxon>Bacteria</taxon>
        <taxon>Pseudomonadati</taxon>
        <taxon>Pseudomonadota</taxon>
        <taxon>Betaproteobacteria</taxon>
        <taxon>Burkholderiales</taxon>
        <taxon>Comamonadaceae</taxon>
        <taxon>Comamonas</taxon>
    </lineage>
</organism>
<feature type="initiator methionine" description="Removed" evidence="2">
    <location>
        <position position="1"/>
    </location>
</feature>
<feature type="chain" id="PRO_0000422780" description="2-aminophenol 1,6-dioxygenase subunit alpha" evidence="2">
    <location>
        <begin position="2"/>
        <end position="271"/>
    </location>
</feature>
<feature type="strand" evidence="11">
    <location>
        <begin position="3"/>
        <end position="9"/>
    </location>
</feature>
<feature type="helix" evidence="11">
    <location>
        <begin position="14"/>
        <end position="17"/>
    </location>
</feature>
<feature type="helix" evidence="11">
    <location>
        <begin position="22"/>
        <end position="40"/>
    </location>
</feature>
<feature type="strand" evidence="11">
    <location>
        <begin position="44"/>
        <end position="62"/>
    </location>
</feature>
<feature type="strand" evidence="11">
    <location>
        <begin position="65"/>
        <end position="71"/>
    </location>
</feature>
<feature type="turn" evidence="11">
    <location>
        <begin position="74"/>
        <end position="76"/>
    </location>
</feature>
<feature type="helix" evidence="11">
    <location>
        <begin position="77"/>
        <end position="79"/>
    </location>
</feature>
<feature type="strand" evidence="11">
    <location>
        <begin position="82"/>
        <end position="88"/>
    </location>
</feature>
<feature type="helix" evidence="11">
    <location>
        <begin position="90"/>
        <end position="102"/>
    </location>
</feature>
<feature type="strand" evidence="11">
    <location>
        <begin position="107"/>
        <end position="110"/>
    </location>
</feature>
<feature type="helix" evidence="11">
    <location>
        <begin position="119"/>
        <end position="128"/>
    </location>
</feature>
<feature type="strand" evidence="11">
    <location>
        <begin position="131"/>
        <end position="135"/>
    </location>
</feature>
<feature type="strand" evidence="11">
    <location>
        <begin position="137"/>
        <end position="143"/>
    </location>
</feature>
<feature type="helix" evidence="11">
    <location>
        <begin position="148"/>
        <end position="164"/>
    </location>
</feature>
<feature type="strand" evidence="11">
    <location>
        <begin position="169"/>
        <end position="174"/>
    </location>
</feature>
<feature type="helix" evidence="11">
    <location>
        <begin position="188"/>
        <end position="190"/>
    </location>
</feature>
<feature type="helix" evidence="11">
    <location>
        <begin position="196"/>
        <end position="211"/>
    </location>
</feature>
<feature type="helix" evidence="11">
    <location>
        <begin position="214"/>
        <end position="227"/>
    </location>
</feature>
<feature type="helix" evidence="11">
    <location>
        <begin position="231"/>
        <end position="234"/>
    </location>
</feature>
<feature type="helix" evidence="11">
    <location>
        <begin position="235"/>
        <end position="243"/>
    </location>
</feature>
<feature type="turn" evidence="11">
    <location>
        <begin position="244"/>
        <end position="246"/>
    </location>
</feature>
<feature type="strand" evidence="11">
    <location>
        <begin position="249"/>
        <end position="259"/>
    </location>
</feature>
<feature type="strand" evidence="11">
    <location>
        <begin position="262"/>
        <end position="270"/>
    </location>
</feature>
<name>AMNA_COMTE</name>
<dbReference type="EMBL" id="AY605054">
    <property type="protein sequence ID" value="AAT35227.1"/>
    <property type="molecule type" value="Genomic_DNA"/>
</dbReference>
<dbReference type="EMBL" id="EF079106">
    <property type="protein sequence ID" value="ABB13578.1"/>
    <property type="molecule type" value="Genomic_DNA"/>
</dbReference>
<dbReference type="RefSeq" id="YP_001967697.1">
    <property type="nucleotide sequence ID" value="NC_010935.1"/>
</dbReference>
<dbReference type="PDB" id="3VSG">
    <property type="method" value="X-ray"/>
    <property type="resolution" value="2.40 A"/>
    <property type="chains" value="A/C=1-271"/>
</dbReference>
<dbReference type="PDB" id="3VSH">
    <property type="method" value="X-ray"/>
    <property type="resolution" value="2.70 A"/>
    <property type="chains" value="A/C=1-271"/>
</dbReference>
<dbReference type="PDB" id="3VSI">
    <property type="method" value="X-ray"/>
    <property type="resolution" value="2.50 A"/>
    <property type="chains" value="A/C=1-271"/>
</dbReference>
<dbReference type="PDB" id="3VSJ">
    <property type="method" value="X-ray"/>
    <property type="resolution" value="2.30 A"/>
    <property type="chains" value="A/C=1-271"/>
</dbReference>
<dbReference type="PDBsum" id="3VSG"/>
<dbReference type="PDBsum" id="3VSH"/>
<dbReference type="PDBsum" id="3VSI"/>
<dbReference type="PDBsum" id="3VSJ"/>
<dbReference type="SMR" id="Q6J1Z5"/>
<dbReference type="KEGG" id="ag:AAT35227"/>
<dbReference type="BioCyc" id="MetaCyc:MONOMER-13345"/>
<dbReference type="BRENDA" id="1.13.11.74">
    <property type="organism ID" value="1590"/>
</dbReference>
<dbReference type="BRENDA" id="1.13.11.76">
    <property type="organism ID" value="1590"/>
</dbReference>
<dbReference type="UniPathway" id="UPA00923"/>
<dbReference type="UniPathway" id="UPA01033"/>
<dbReference type="EvolutionaryTrace" id="Q6J1Z5"/>
<dbReference type="GO" id="GO:0008198">
    <property type="term" value="F:ferrous iron binding"/>
    <property type="evidence" value="ECO:0007669"/>
    <property type="project" value="InterPro"/>
</dbReference>
<dbReference type="GO" id="GO:0016702">
    <property type="term" value="F:oxidoreductase activity, acting on single donors with incorporation of molecular oxygen, incorporation of two atoms of oxygen"/>
    <property type="evidence" value="ECO:0007669"/>
    <property type="project" value="UniProtKB-ARBA"/>
</dbReference>
<dbReference type="GO" id="GO:0009056">
    <property type="term" value="P:catabolic process"/>
    <property type="evidence" value="ECO:0007669"/>
    <property type="project" value="UniProtKB-KW"/>
</dbReference>
<dbReference type="CDD" id="cd07373">
    <property type="entry name" value="2A5CPDO_A"/>
    <property type="match status" value="1"/>
</dbReference>
<dbReference type="Gene3D" id="3.40.830.10">
    <property type="entry name" value="LigB-like"/>
    <property type="match status" value="1"/>
</dbReference>
<dbReference type="InterPro" id="IPR004183">
    <property type="entry name" value="Xdiol_dOase_suB"/>
</dbReference>
<dbReference type="Pfam" id="PF02900">
    <property type="entry name" value="LigB"/>
    <property type="match status" value="1"/>
</dbReference>
<dbReference type="SUPFAM" id="SSF53213">
    <property type="entry name" value="LigB-like"/>
    <property type="match status" value="1"/>
</dbReference>
<keyword id="KW-0002">3D-structure</keyword>
<keyword id="KW-0058">Aromatic hydrocarbons catabolism</keyword>
<keyword id="KW-0903">Direct protein sequencing</keyword>
<keyword id="KW-0614">Plasmid</keyword>
<comment type="function">
    <text evidence="2 3">Component of the 2-aminophenol 1,6-dioxygenase (APD) complex that catalyzes the ring fission of 2-aminophenol to produce 2-aminomuconic semialdehyde. CnbCa may have a role in the stability of the complex. The complex is also active on other substrates such as 2-amino-5-chlorophenol (68% activity), protocatechuate (33% activity) and catechol (5% activity). Both 2-aminophenol and 2-amino-5-cholorophenol are likely native substrates for this dioxygenase which is involved in the reductive degradation pathway of both nitrobenzene (NB) and 4-chloronitrobenzene (4-CNB), allowing C.testosteroni strain CNB-1 to grow on these compounds as sole source of carbon, nitrogen, and energy.</text>
</comment>
<comment type="pathway">
    <text evidence="3 4">Xenobiotic degradation; nitrobenzene degradation.</text>
</comment>
<comment type="pathway">
    <text>Xenobiotic degradation; 4-chloronitrobenzene degradation.</text>
</comment>
<comment type="subunit">
    <text evidence="2 5">The APD complex is a heterotetramer of 2 alpha (CnbCa) and 2 beta (CnbCb) subunits.</text>
</comment>
<comment type="miscellaneous">
    <text>Not active on 4-methylcatechol, 4-chlorocatechol, 2,4-dihydroxybenzoate, o-nitrophenol, p-nitrophenol or 4-nitrocatechol.</text>
</comment>
<comment type="similarity">
    <text evidence="1">Belongs to the LigB/MhpB extradiol dioxygenase family.</text>
</comment>
<comment type="caution">
    <text evidence="7">In contrast to other members of the family, lacks the conserved iron-binding sites, suggesting that the alpha subunit has no oxidoreductase activity.</text>
</comment>
<protein>
    <recommendedName>
        <fullName evidence="6">2-aminophenol 1,6-dioxygenase subunit alpha</fullName>
    </recommendedName>
    <alternativeName>
        <fullName evidence="9">2-amino-5-chlorophenol 1,6-dioxygenase subunit alpha</fullName>
    </alternativeName>
</protein>